<name>PROB_MYCVP</name>
<protein>
    <recommendedName>
        <fullName evidence="1">Glutamate 5-kinase</fullName>
        <ecNumber evidence="1">2.7.2.11</ecNumber>
    </recommendedName>
    <alternativeName>
        <fullName evidence="1">Gamma-glutamyl kinase</fullName>
        <shortName evidence="1">GK</shortName>
    </alternativeName>
</protein>
<comment type="function">
    <text evidence="1">Catalyzes the transfer of a phosphate group to glutamate to form L-glutamate 5-phosphate.</text>
</comment>
<comment type="catalytic activity">
    <reaction evidence="1">
        <text>L-glutamate + ATP = L-glutamyl 5-phosphate + ADP</text>
        <dbReference type="Rhea" id="RHEA:14877"/>
        <dbReference type="ChEBI" id="CHEBI:29985"/>
        <dbReference type="ChEBI" id="CHEBI:30616"/>
        <dbReference type="ChEBI" id="CHEBI:58274"/>
        <dbReference type="ChEBI" id="CHEBI:456216"/>
        <dbReference type="EC" id="2.7.2.11"/>
    </reaction>
</comment>
<comment type="pathway">
    <text evidence="1">Amino-acid biosynthesis; L-proline biosynthesis; L-glutamate 5-semialdehyde from L-glutamate: step 1/2.</text>
</comment>
<comment type="subcellular location">
    <subcellularLocation>
        <location evidence="1">Cytoplasm</location>
    </subcellularLocation>
</comment>
<comment type="similarity">
    <text evidence="1">Belongs to the glutamate 5-kinase family.</text>
</comment>
<organism>
    <name type="scientific">Mycolicibacterium vanbaalenii (strain DSM 7251 / JCM 13017 / BCRC 16820 / KCTC 9966 / NRRL B-24157 / PYR-1)</name>
    <name type="common">Mycobacterium vanbaalenii</name>
    <dbReference type="NCBI Taxonomy" id="350058"/>
    <lineage>
        <taxon>Bacteria</taxon>
        <taxon>Bacillati</taxon>
        <taxon>Actinomycetota</taxon>
        <taxon>Actinomycetes</taxon>
        <taxon>Mycobacteriales</taxon>
        <taxon>Mycobacteriaceae</taxon>
        <taxon>Mycolicibacterium</taxon>
    </lineage>
</organism>
<reference key="1">
    <citation type="submission" date="2006-12" db="EMBL/GenBank/DDBJ databases">
        <title>Complete sequence of Mycobacterium vanbaalenii PYR-1.</title>
        <authorList>
            <consortium name="US DOE Joint Genome Institute"/>
            <person name="Copeland A."/>
            <person name="Lucas S."/>
            <person name="Lapidus A."/>
            <person name="Barry K."/>
            <person name="Detter J.C."/>
            <person name="Glavina del Rio T."/>
            <person name="Hammon N."/>
            <person name="Israni S."/>
            <person name="Dalin E."/>
            <person name="Tice H."/>
            <person name="Pitluck S."/>
            <person name="Singan V."/>
            <person name="Schmutz J."/>
            <person name="Larimer F."/>
            <person name="Land M."/>
            <person name="Hauser L."/>
            <person name="Kyrpides N."/>
            <person name="Anderson I.J."/>
            <person name="Miller C."/>
            <person name="Richardson P."/>
        </authorList>
    </citation>
    <scope>NUCLEOTIDE SEQUENCE [LARGE SCALE GENOMIC DNA]</scope>
    <source>
        <strain>DSM 7251 / JCM 13017 / BCRC 16820 / KCTC 9966 / NRRL B-24157 / PYR-1</strain>
    </source>
</reference>
<evidence type="ECO:0000255" key="1">
    <source>
        <dbReference type="HAMAP-Rule" id="MF_00456"/>
    </source>
</evidence>
<accession>A1TC20</accession>
<sequence>MSAHRDAIRTARSVVVKIGTTALTTPTGVFDTSRLQDLADAIEARMKAGSDVVIVSSGAIAAGIEPLGLTKRPTDLATKQAAASVGQVALVNTWSSAFGRYHRTVGQVLLTAHDISMRVQHTNAQRTLDRLRALHAVAIVNENDTVATNEIRFGDNDRLSALVAHLVGADALILLSDVDGLYDSDPRKGNARFIPEVDGPDDLEGVTAGRGSHLGTGGMVSKLSSALLAADAGVPVLLAAASDAAAALDGASVGTVFAPRKERMSARRFWVRYAAEASGALTLDDGAVKAVVRQRRSLLPAGITALSGRFYGGDVVELRNQDATMVARGVVAYDAAELATMLGRSTSDLPAEMRRPAVHADDLVAV</sequence>
<keyword id="KW-0028">Amino-acid biosynthesis</keyword>
<keyword id="KW-0067">ATP-binding</keyword>
<keyword id="KW-0963">Cytoplasm</keyword>
<keyword id="KW-0418">Kinase</keyword>
<keyword id="KW-0547">Nucleotide-binding</keyword>
<keyword id="KW-0641">Proline biosynthesis</keyword>
<keyword id="KW-0808">Transferase</keyword>
<feature type="chain" id="PRO_1000081079" description="Glutamate 5-kinase">
    <location>
        <begin position="1"/>
        <end position="366"/>
    </location>
</feature>
<feature type="domain" description="PUA" evidence="1">
    <location>
        <begin position="278"/>
        <end position="356"/>
    </location>
</feature>
<feature type="binding site" evidence="1">
    <location>
        <position position="17"/>
    </location>
    <ligand>
        <name>ATP</name>
        <dbReference type="ChEBI" id="CHEBI:30616"/>
    </ligand>
</feature>
<feature type="binding site" evidence="1">
    <location>
        <position position="57"/>
    </location>
    <ligand>
        <name>substrate</name>
    </ligand>
</feature>
<feature type="binding site" evidence="1">
    <location>
        <position position="144"/>
    </location>
    <ligand>
        <name>substrate</name>
    </ligand>
</feature>
<feature type="binding site" evidence="1">
    <location>
        <position position="156"/>
    </location>
    <ligand>
        <name>substrate</name>
    </ligand>
</feature>
<feature type="binding site" evidence="1">
    <location>
        <begin position="176"/>
        <end position="177"/>
    </location>
    <ligand>
        <name>ATP</name>
        <dbReference type="ChEBI" id="CHEBI:30616"/>
    </ligand>
</feature>
<feature type="binding site" evidence="1">
    <location>
        <begin position="216"/>
        <end position="222"/>
    </location>
    <ligand>
        <name>ATP</name>
        <dbReference type="ChEBI" id="CHEBI:30616"/>
    </ligand>
</feature>
<dbReference type="EC" id="2.7.2.11" evidence="1"/>
<dbReference type="EMBL" id="CP000511">
    <property type="protein sequence ID" value="ABM14720.1"/>
    <property type="molecule type" value="Genomic_DNA"/>
</dbReference>
<dbReference type="RefSeq" id="WP_011781100.1">
    <property type="nucleotide sequence ID" value="NC_008726.1"/>
</dbReference>
<dbReference type="SMR" id="A1TC20"/>
<dbReference type="STRING" id="350058.Mvan_3943"/>
<dbReference type="KEGG" id="mva:Mvan_3943"/>
<dbReference type="eggNOG" id="COG0263">
    <property type="taxonomic scope" value="Bacteria"/>
</dbReference>
<dbReference type="HOGENOM" id="CLU_025400_2_0_11"/>
<dbReference type="UniPathway" id="UPA00098">
    <property type="reaction ID" value="UER00359"/>
</dbReference>
<dbReference type="Proteomes" id="UP000009159">
    <property type="component" value="Chromosome"/>
</dbReference>
<dbReference type="GO" id="GO:0005829">
    <property type="term" value="C:cytosol"/>
    <property type="evidence" value="ECO:0007669"/>
    <property type="project" value="TreeGrafter"/>
</dbReference>
<dbReference type="GO" id="GO:0005524">
    <property type="term" value="F:ATP binding"/>
    <property type="evidence" value="ECO:0007669"/>
    <property type="project" value="UniProtKB-KW"/>
</dbReference>
<dbReference type="GO" id="GO:0004349">
    <property type="term" value="F:glutamate 5-kinase activity"/>
    <property type="evidence" value="ECO:0007669"/>
    <property type="project" value="UniProtKB-UniRule"/>
</dbReference>
<dbReference type="GO" id="GO:0003723">
    <property type="term" value="F:RNA binding"/>
    <property type="evidence" value="ECO:0007669"/>
    <property type="project" value="InterPro"/>
</dbReference>
<dbReference type="GO" id="GO:0055129">
    <property type="term" value="P:L-proline biosynthetic process"/>
    <property type="evidence" value="ECO:0007669"/>
    <property type="project" value="UniProtKB-UniRule"/>
</dbReference>
<dbReference type="CDD" id="cd04242">
    <property type="entry name" value="AAK_G5K_ProB"/>
    <property type="match status" value="1"/>
</dbReference>
<dbReference type="CDD" id="cd21157">
    <property type="entry name" value="PUA_G5K"/>
    <property type="match status" value="1"/>
</dbReference>
<dbReference type="FunFam" id="3.40.1160.10:FF:000018">
    <property type="entry name" value="Glutamate 5-kinase"/>
    <property type="match status" value="1"/>
</dbReference>
<dbReference type="Gene3D" id="3.40.1160.10">
    <property type="entry name" value="Acetylglutamate kinase-like"/>
    <property type="match status" value="1"/>
</dbReference>
<dbReference type="Gene3D" id="2.30.130.10">
    <property type="entry name" value="PUA domain"/>
    <property type="match status" value="1"/>
</dbReference>
<dbReference type="HAMAP" id="MF_00456">
    <property type="entry name" value="ProB"/>
    <property type="match status" value="1"/>
</dbReference>
<dbReference type="InterPro" id="IPR036393">
    <property type="entry name" value="AceGlu_kinase-like_sf"/>
</dbReference>
<dbReference type="InterPro" id="IPR001048">
    <property type="entry name" value="Asp/Glu/Uridylate_kinase"/>
</dbReference>
<dbReference type="InterPro" id="IPR041739">
    <property type="entry name" value="G5K_ProB"/>
</dbReference>
<dbReference type="InterPro" id="IPR001057">
    <property type="entry name" value="Glu/AcGlu_kinase"/>
</dbReference>
<dbReference type="InterPro" id="IPR011529">
    <property type="entry name" value="Glu_5kinase"/>
</dbReference>
<dbReference type="InterPro" id="IPR005715">
    <property type="entry name" value="Glu_5kinase/COase_Synthase"/>
</dbReference>
<dbReference type="InterPro" id="IPR019797">
    <property type="entry name" value="Glutamate_5-kinase_CS"/>
</dbReference>
<dbReference type="InterPro" id="IPR002478">
    <property type="entry name" value="PUA"/>
</dbReference>
<dbReference type="InterPro" id="IPR015947">
    <property type="entry name" value="PUA-like_sf"/>
</dbReference>
<dbReference type="InterPro" id="IPR036974">
    <property type="entry name" value="PUA_sf"/>
</dbReference>
<dbReference type="NCBIfam" id="TIGR01027">
    <property type="entry name" value="proB"/>
    <property type="match status" value="1"/>
</dbReference>
<dbReference type="PANTHER" id="PTHR43654">
    <property type="entry name" value="GLUTAMATE 5-KINASE"/>
    <property type="match status" value="1"/>
</dbReference>
<dbReference type="PANTHER" id="PTHR43654:SF1">
    <property type="entry name" value="ISOPENTENYL PHOSPHATE KINASE"/>
    <property type="match status" value="1"/>
</dbReference>
<dbReference type="Pfam" id="PF00696">
    <property type="entry name" value="AA_kinase"/>
    <property type="match status" value="1"/>
</dbReference>
<dbReference type="Pfam" id="PF01472">
    <property type="entry name" value="PUA"/>
    <property type="match status" value="1"/>
</dbReference>
<dbReference type="PIRSF" id="PIRSF000729">
    <property type="entry name" value="GK"/>
    <property type="match status" value="1"/>
</dbReference>
<dbReference type="PRINTS" id="PR00474">
    <property type="entry name" value="GLU5KINASE"/>
</dbReference>
<dbReference type="SMART" id="SM00359">
    <property type="entry name" value="PUA"/>
    <property type="match status" value="1"/>
</dbReference>
<dbReference type="SUPFAM" id="SSF53633">
    <property type="entry name" value="Carbamate kinase-like"/>
    <property type="match status" value="1"/>
</dbReference>
<dbReference type="SUPFAM" id="SSF88697">
    <property type="entry name" value="PUA domain-like"/>
    <property type="match status" value="1"/>
</dbReference>
<dbReference type="PROSITE" id="PS00902">
    <property type="entry name" value="GLUTAMATE_5_KINASE"/>
    <property type="match status" value="1"/>
</dbReference>
<dbReference type="PROSITE" id="PS50890">
    <property type="entry name" value="PUA"/>
    <property type="match status" value="1"/>
</dbReference>
<gene>
    <name evidence="1" type="primary">proB</name>
    <name type="ordered locus">Mvan_3943</name>
</gene>
<proteinExistence type="inferred from homology"/>